<feature type="chain" id="PRO_0000171098" description="UPF0354 protein BH3252">
    <location>
        <begin position="1"/>
        <end position="265"/>
    </location>
</feature>
<accession>Q9K7V7</accession>
<proteinExistence type="inferred from homology"/>
<sequence>MEVREIRKQLEEKLNRPEWTLSYDHKEAKLRIEDKELKKGMTIALKPLLAKVERLGDRAISEMVHYVQTGMAAFKKQTTIKGNEKRIFPVIRATSFPEENRDGHRLLFDEHTAETRVYYSLDLGDSYTLLHEQQLSREEMSAKEIREMALFNLRSLSEPLKADKVAGNTFYFLNSNDGYDASRILNESLLEKMSQKVEGQLAVAAPHQDVLIFADIVNERGYDVLAQVTMQFYAQGRIPITALPFLYENGELEPTFILAQRKPKE</sequence>
<evidence type="ECO:0000255" key="1">
    <source>
        <dbReference type="HAMAP-Rule" id="MF_01548"/>
    </source>
</evidence>
<name>Y3252_HALH5</name>
<dbReference type="EMBL" id="BA000004">
    <property type="protein sequence ID" value="BAB06971.1"/>
    <property type="molecule type" value="Genomic_DNA"/>
</dbReference>
<dbReference type="PIR" id="D84056">
    <property type="entry name" value="D84056"/>
</dbReference>
<dbReference type="RefSeq" id="WP_010899393.1">
    <property type="nucleotide sequence ID" value="NC_002570.2"/>
</dbReference>
<dbReference type="SMR" id="Q9K7V7"/>
<dbReference type="STRING" id="272558.gene:10729164"/>
<dbReference type="KEGG" id="bha:BH3252"/>
<dbReference type="eggNOG" id="COG4848">
    <property type="taxonomic scope" value="Bacteria"/>
</dbReference>
<dbReference type="HOGENOM" id="CLU_085634_0_0_9"/>
<dbReference type="OrthoDB" id="154553at2"/>
<dbReference type="Proteomes" id="UP000001258">
    <property type="component" value="Chromosome"/>
</dbReference>
<dbReference type="HAMAP" id="MF_01548">
    <property type="entry name" value="UPF0354"/>
    <property type="match status" value="1"/>
</dbReference>
<dbReference type="InterPro" id="IPR010838">
    <property type="entry name" value="DUF1444"/>
</dbReference>
<dbReference type="NCBIfam" id="NF010189">
    <property type="entry name" value="PRK13668.1"/>
    <property type="match status" value="1"/>
</dbReference>
<dbReference type="Pfam" id="PF07285">
    <property type="entry name" value="DUF1444"/>
    <property type="match status" value="1"/>
</dbReference>
<dbReference type="PIRSF" id="PIRSF012562">
    <property type="entry name" value="UCP012562"/>
    <property type="match status" value="1"/>
</dbReference>
<protein>
    <recommendedName>
        <fullName evidence="1">UPF0354 protein BH3252</fullName>
    </recommendedName>
</protein>
<reference key="1">
    <citation type="journal article" date="2000" name="Nucleic Acids Res.">
        <title>Complete genome sequence of the alkaliphilic bacterium Bacillus halodurans and genomic sequence comparison with Bacillus subtilis.</title>
        <authorList>
            <person name="Takami H."/>
            <person name="Nakasone K."/>
            <person name="Takaki Y."/>
            <person name="Maeno G."/>
            <person name="Sasaki R."/>
            <person name="Masui N."/>
            <person name="Fuji F."/>
            <person name="Hirama C."/>
            <person name="Nakamura Y."/>
            <person name="Ogasawara N."/>
            <person name="Kuhara S."/>
            <person name="Horikoshi K."/>
        </authorList>
    </citation>
    <scope>NUCLEOTIDE SEQUENCE [LARGE SCALE GENOMIC DNA]</scope>
    <source>
        <strain>ATCC BAA-125 / DSM 18197 / FERM 7344 / JCM 9153 / C-125</strain>
    </source>
</reference>
<comment type="similarity">
    <text evidence="1">Belongs to the UPF0354 family.</text>
</comment>
<organism>
    <name type="scientific">Halalkalibacterium halodurans (strain ATCC BAA-125 / DSM 18197 / FERM 7344 / JCM 9153 / C-125)</name>
    <name type="common">Bacillus halodurans</name>
    <dbReference type="NCBI Taxonomy" id="272558"/>
    <lineage>
        <taxon>Bacteria</taxon>
        <taxon>Bacillati</taxon>
        <taxon>Bacillota</taxon>
        <taxon>Bacilli</taxon>
        <taxon>Bacillales</taxon>
        <taxon>Bacillaceae</taxon>
        <taxon>Halalkalibacterium (ex Joshi et al. 2022)</taxon>
    </lineage>
</organism>
<gene>
    <name type="ordered locus">BH3252</name>
</gene>
<keyword id="KW-1185">Reference proteome</keyword>